<sequence length="707" mass="78811">MPELRGGVWRARLRSKKVYDVQDADPAASPVSPAPRGRTGRRGGAAAGRGNKTVAEGGGRKALKPRGKGCRAVDLCKDQPCKDLPEVIARKAVTGKAQEDLGLNKVADRAANLMMDGESGDKFAAAEDESTTTPVPERVQVGNSPEYITDRKLGKGGFGQVYVGRRVSGGGSRTGPDAQEVALKFEHRSSKGCNYGPPYEWQVYHTLNGCYGIPSVHYKGRLGDYYILVMDMLGPSLWDVWNSVGQAMSAHMVACIAVEAISILEKLHSKGFVHGDVKPENFLLGHPGSVDEKKLFLIDLGLASRWKEASSGQHVDYDQRPDVFRGTIRYASVHAHLGRTGSRRDDLESLAYTLIFLIRGRLPWQGYQGDNKSFLVCKKKMATSPELLCCFCPAPFKHFLEMVTNMKFDEEPNYPKLISLFDGLIEGPASRPIRIDGALKVGQKRGRMVVNLDDDEQPKKKVRLGSPATQWISVYNARRPMKQRYHYNVADSRLHQHIEKGNEDGLYISCVSSSANFWALIMDAGTGFCSQVYELSQVFLHKDWIMEQWEKNYYITAIAGATNGSSLVVMSKGTPYTQQSYKVSESFPYKWINKKWKEGFHVTSMATAGNRWGVVMSRNAGYSHQVVELDFLYPSEGIHRRWETGYRITSTAATPDQAAFILSIPKRKPMDETQETLRTSSFPSNHVKEKWSKNLYIASICYGRTVC</sequence>
<comment type="function">
    <text evidence="4 5 6 7 10">Casein kinases are operationally defined by their preferential utilization of acidic proteins such as caseins as substrates. It can phosphorylate a large number of proteins (Probable). Can phosphorylate casein on threonine residues in vitro. Involved in the regulation of flowering time through gibberellin (GA) signaling, and independently of photoperiod. Phosphorylates the DELLA protein SLR1, stabilizing SLR1 protein and sustaining SLR1 activity as repressor of GA signaling (PubMed:20400938). Required for normal development of male floral organs and grains, through modulation of GA signaling (PubMed:26202549). Targeted and repressed by the homeobox protein HAZ1 during GA signaling (PubMed:21951842). Can phosphorylate phosvitin and SLR1 in vitro. Is not required for clock function in either the presence or the absence of light signals. Involved in a genetic control pathway for photoperiodic flowering under long day (LD) conditions that includes HD1, GHD7, HD5 and HD2. Phosphorylates and activates GHD7, a major floral repressor under LD conditions. Phosphorylation of GHD7 enhances its function in the repression of EHD1, HD3A and HD3B/RFT1, and obviously delaying flowering (PubMed:23789941).</text>
</comment>
<comment type="catalytic activity">
    <reaction evidence="10">
        <text>L-seryl-[protein] + ATP = O-phospho-L-seryl-[protein] + ADP + H(+)</text>
        <dbReference type="Rhea" id="RHEA:17989"/>
        <dbReference type="Rhea" id="RHEA-COMP:9863"/>
        <dbReference type="Rhea" id="RHEA-COMP:11604"/>
        <dbReference type="ChEBI" id="CHEBI:15378"/>
        <dbReference type="ChEBI" id="CHEBI:29999"/>
        <dbReference type="ChEBI" id="CHEBI:30616"/>
        <dbReference type="ChEBI" id="CHEBI:83421"/>
        <dbReference type="ChEBI" id="CHEBI:456216"/>
        <dbReference type="EC" id="2.7.11.1"/>
    </reaction>
</comment>
<comment type="catalytic activity">
    <reaction evidence="10">
        <text>L-threonyl-[protein] + ATP = O-phospho-L-threonyl-[protein] + ADP + H(+)</text>
        <dbReference type="Rhea" id="RHEA:46608"/>
        <dbReference type="Rhea" id="RHEA-COMP:11060"/>
        <dbReference type="Rhea" id="RHEA-COMP:11605"/>
        <dbReference type="ChEBI" id="CHEBI:15378"/>
        <dbReference type="ChEBI" id="CHEBI:30013"/>
        <dbReference type="ChEBI" id="CHEBI:30616"/>
        <dbReference type="ChEBI" id="CHEBI:61977"/>
        <dbReference type="ChEBI" id="CHEBI:456216"/>
        <dbReference type="EC" id="2.7.11.1"/>
    </reaction>
</comment>
<comment type="subunit">
    <text evidence="1 4 6">Monomer (By similarity). Interacts with GHD7 (via C-terminus) (PubMed:23789941). Interacts with SLR1 (PubMed:20400938, PubMed:23789941).</text>
</comment>
<comment type="interaction">
    <interactant intactId="EBI-7913614">
        <id>Q852L0</id>
    </interactant>
    <interactant intactId="EBI-7913631">
        <id>Q7G7J6</id>
        <label>SLR1</label>
    </interactant>
    <organismsDiffer>false</organismsDiffer>
    <experiments>2</experiments>
</comment>
<comment type="subcellular location">
    <subcellularLocation>
        <location evidence="1">Cytoplasm</location>
    </subcellularLocation>
    <subcellularLocation>
        <location evidence="4">Nucleus</location>
    </subcellularLocation>
</comment>
<comment type="tissue specificity">
    <text evidence="4 6">Expressed in roots, leaves and stems (PubMed:20400938). Expressed in leaf vascular bundles, and proximal regions of the shoot and roots (PubMed:23789941).</text>
</comment>
<comment type="developmental stage">
    <text evidence="4">Specifically expressed at stage 2 during floral development.</text>
</comment>
<comment type="induction">
    <text evidence="4">Down-regulated by gibberellin (GA).</text>
</comment>
<comment type="PTM">
    <text evidence="6">Autophosphorylated.</text>
</comment>
<comment type="polymorphism">
    <text evidence="6">The cultivar Koshihikari contains a non-synonymous substitution of Ala-331 to Thr-331, which confers strongly reduced kinase activity of HD16, and results in decreased photoperiod sensitivity compared to the cultivar Nipponbare.</text>
</comment>
<comment type="disruption phenotype">
    <text evidence="4">Early flowering. Enhanced response to gibberellin (GA).</text>
</comment>
<comment type="similarity">
    <text evidence="10">Belongs to the protein kinase superfamily. CK1 Ser/Thr protein kinase family. Casein kinase I subfamily.</text>
</comment>
<organism>
    <name type="scientific">Oryza sativa subsp. japonica</name>
    <name type="common">Rice</name>
    <dbReference type="NCBI Taxonomy" id="39947"/>
    <lineage>
        <taxon>Eukaryota</taxon>
        <taxon>Viridiplantae</taxon>
        <taxon>Streptophyta</taxon>
        <taxon>Embryophyta</taxon>
        <taxon>Tracheophyta</taxon>
        <taxon>Spermatophyta</taxon>
        <taxon>Magnoliopsida</taxon>
        <taxon>Liliopsida</taxon>
        <taxon>Poales</taxon>
        <taxon>Poaceae</taxon>
        <taxon>BOP clade</taxon>
        <taxon>Oryzoideae</taxon>
        <taxon>Oryzeae</taxon>
        <taxon>Oryzinae</taxon>
        <taxon>Oryza</taxon>
        <taxon>Oryza sativa</taxon>
    </lineage>
</organism>
<keyword id="KW-0067">ATP-binding</keyword>
<keyword id="KW-0963">Cytoplasm</keyword>
<keyword id="KW-0287">Flowering</keyword>
<keyword id="KW-0939">Gibberellin signaling pathway</keyword>
<keyword id="KW-0341">Growth regulation</keyword>
<keyword id="KW-0418">Kinase</keyword>
<keyword id="KW-0547">Nucleotide-binding</keyword>
<keyword id="KW-0539">Nucleus</keyword>
<keyword id="KW-1185">Reference proteome</keyword>
<keyword id="KW-0723">Serine/threonine-protein kinase</keyword>
<keyword id="KW-0808">Transferase</keyword>
<name>HD16N_ORYSJ</name>
<reference key="1">
    <citation type="journal article" date="2013" name="Plant J.">
        <title>Hd16, a gene for casein kinase I, is involved in the control of rice flowering time by modulating the day-length response.</title>
        <authorList>
            <person name="Hori K."/>
            <person name="Ogiso-Tanaka E."/>
            <person name="Matsubara K."/>
            <person name="Yamanouchi U."/>
            <person name="Ebana K."/>
            <person name="Yano M."/>
        </authorList>
    </citation>
    <scope>NUCLEOTIDE SEQUENCE [MRNA]</scope>
    <scope>FUNCTION</scope>
    <scope>INTERACTION WITH GHD7 AND SLR1</scope>
    <scope>TISSUE SPECIFICITY</scope>
    <scope>PHOSPHORYLATION</scope>
    <scope>POLYMORPHISM</scope>
    <source>
        <strain>cv. Nipponbare</strain>
    </source>
</reference>
<reference key="2">
    <citation type="journal article" date="2005" name="Genome Res.">
        <title>Sequence, annotation, and analysis of synteny between rice chromosome 3 and diverged grass species.</title>
        <authorList>
            <consortium name="The rice chromosome 3 sequencing consortium"/>
            <person name="Buell C.R."/>
            <person name="Yuan Q."/>
            <person name="Ouyang S."/>
            <person name="Liu J."/>
            <person name="Zhu W."/>
            <person name="Wang A."/>
            <person name="Maiti R."/>
            <person name="Haas B."/>
            <person name="Wortman J."/>
            <person name="Pertea M."/>
            <person name="Jones K.M."/>
            <person name="Kim M."/>
            <person name="Overton L."/>
            <person name="Tsitrin T."/>
            <person name="Fadrosh D."/>
            <person name="Bera J."/>
            <person name="Weaver B."/>
            <person name="Jin S."/>
            <person name="Johri S."/>
            <person name="Reardon M."/>
            <person name="Webb K."/>
            <person name="Hill J."/>
            <person name="Moffat K."/>
            <person name="Tallon L."/>
            <person name="Van Aken S."/>
            <person name="Lewis M."/>
            <person name="Utterback T."/>
            <person name="Feldblyum T."/>
            <person name="Zismann V."/>
            <person name="Iobst S."/>
            <person name="Hsiao J."/>
            <person name="de Vazeille A.R."/>
            <person name="Salzberg S.L."/>
            <person name="White O."/>
            <person name="Fraser C.M."/>
            <person name="Yu Y."/>
            <person name="Kim H."/>
            <person name="Rambo T."/>
            <person name="Currie J."/>
            <person name="Collura K."/>
            <person name="Kernodle-Thompson S."/>
            <person name="Wei F."/>
            <person name="Kudrna K."/>
            <person name="Ammiraju J.S.S."/>
            <person name="Luo M."/>
            <person name="Goicoechea J.L."/>
            <person name="Wing R.A."/>
            <person name="Henry D."/>
            <person name="Oates R."/>
            <person name="Palmer M."/>
            <person name="Pries G."/>
            <person name="Saski C."/>
            <person name="Simmons J."/>
            <person name="Soderlund C."/>
            <person name="Nelson W."/>
            <person name="de la Bastide M."/>
            <person name="Spiegel L."/>
            <person name="Nascimento L."/>
            <person name="Huang E."/>
            <person name="Preston R."/>
            <person name="Zutavern T."/>
            <person name="Palmer L."/>
            <person name="O'Shaughnessy A."/>
            <person name="Dike S."/>
            <person name="McCombie W.R."/>
            <person name="Minx P."/>
            <person name="Cordum H."/>
            <person name="Wilson R."/>
            <person name="Jin W."/>
            <person name="Lee H.R."/>
            <person name="Jiang J."/>
            <person name="Jackson S."/>
        </authorList>
    </citation>
    <scope>NUCLEOTIDE SEQUENCE [LARGE SCALE GENOMIC DNA]</scope>
    <source>
        <strain>cv. Nipponbare</strain>
    </source>
</reference>
<reference key="3">
    <citation type="journal article" date="2005" name="Nature">
        <title>The map-based sequence of the rice genome.</title>
        <authorList>
            <consortium name="International rice genome sequencing project (IRGSP)"/>
        </authorList>
    </citation>
    <scope>NUCLEOTIDE SEQUENCE [LARGE SCALE GENOMIC DNA]</scope>
    <source>
        <strain>cv. Nipponbare</strain>
    </source>
</reference>
<reference key="4">
    <citation type="journal article" date="2008" name="Nucleic Acids Res.">
        <title>The rice annotation project database (RAP-DB): 2008 update.</title>
        <authorList>
            <consortium name="The rice annotation project (RAP)"/>
        </authorList>
    </citation>
    <scope>GENOME REANNOTATION</scope>
    <source>
        <strain>cv. Nipponbare</strain>
    </source>
</reference>
<reference key="5">
    <citation type="journal article" date="2013" name="Rice">
        <title>Improvement of the Oryza sativa Nipponbare reference genome using next generation sequence and optical map data.</title>
        <authorList>
            <person name="Kawahara Y."/>
            <person name="de la Bastide M."/>
            <person name="Hamilton J.P."/>
            <person name="Kanamori H."/>
            <person name="McCombie W.R."/>
            <person name="Ouyang S."/>
            <person name="Schwartz D.C."/>
            <person name="Tanaka T."/>
            <person name="Wu J."/>
            <person name="Zhou S."/>
            <person name="Childs K.L."/>
            <person name="Davidson R.M."/>
            <person name="Lin H."/>
            <person name="Quesada-Ocampo L."/>
            <person name="Vaillancourt B."/>
            <person name="Sakai H."/>
            <person name="Lee S.S."/>
            <person name="Kim J."/>
            <person name="Numa H."/>
            <person name="Itoh T."/>
            <person name="Buell C.R."/>
            <person name="Matsumoto T."/>
        </authorList>
    </citation>
    <scope>GENOME REANNOTATION</scope>
    <source>
        <strain>cv. Nipponbare</strain>
    </source>
</reference>
<reference key="6">
    <citation type="journal article" date="2005" name="PLoS Biol.">
        <title>The genomes of Oryza sativa: a history of duplications.</title>
        <authorList>
            <person name="Yu J."/>
            <person name="Wang J."/>
            <person name="Lin W."/>
            <person name="Li S."/>
            <person name="Li H."/>
            <person name="Zhou J."/>
            <person name="Ni P."/>
            <person name="Dong W."/>
            <person name="Hu S."/>
            <person name="Zeng C."/>
            <person name="Zhang J."/>
            <person name="Zhang Y."/>
            <person name="Li R."/>
            <person name="Xu Z."/>
            <person name="Li S."/>
            <person name="Li X."/>
            <person name="Zheng H."/>
            <person name="Cong L."/>
            <person name="Lin L."/>
            <person name="Yin J."/>
            <person name="Geng J."/>
            <person name="Li G."/>
            <person name="Shi J."/>
            <person name="Liu J."/>
            <person name="Lv H."/>
            <person name="Li J."/>
            <person name="Wang J."/>
            <person name="Deng Y."/>
            <person name="Ran L."/>
            <person name="Shi X."/>
            <person name="Wang X."/>
            <person name="Wu Q."/>
            <person name="Li C."/>
            <person name="Ren X."/>
            <person name="Wang J."/>
            <person name="Wang X."/>
            <person name="Li D."/>
            <person name="Liu D."/>
            <person name="Zhang X."/>
            <person name="Ji Z."/>
            <person name="Zhao W."/>
            <person name="Sun Y."/>
            <person name="Zhang Z."/>
            <person name="Bao J."/>
            <person name="Han Y."/>
            <person name="Dong L."/>
            <person name="Ji J."/>
            <person name="Chen P."/>
            <person name="Wu S."/>
            <person name="Liu J."/>
            <person name="Xiao Y."/>
            <person name="Bu D."/>
            <person name="Tan J."/>
            <person name="Yang L."/>
            <person name="Ye C."/>
            <person name="Zhang J."/>
            <person name="Xu J."/>
            <person name="Zhou Y."/>
            <person name="Yu Y."/>
            <person name="Zhang B."/>
            <person name="Zhuang S."/>
            <person name="Wei H."/>
            <person name="Liu B."/>
            <person name="Lei M."/>
            <person name="Yu H."/>
            <person name="Li Y."/>
            <person name="Xu H."/>
            <person name="Wei S."/>
            <person name="He X."/>
            <person name="Fang L."/>
            <person name="Zhang Z."/>
            <person name="Zhang Y."/>
            <person name="Huang X."/>
            <person name="Su Z."/>
            <person name="Tong W."/>
            <person name="Li J."/>
            <person name="Tong Z."/>
            <person name="Li S."/>
            <person name="Ye J."/>
            <person name="Wang L."/>
            <person name="Fang L."/>
            <person name="Lei T."/>
            <person name="Chen C.-S."/>
            <person name="Chen H.-C."/>
            <person name="Xu Z."/>
            <person name="Li H."/>
            <person name="Huang H."/>
            <person name="Zhang F."/>
            <person name="Xu H."/>
            <person name="Li N."/>
            <person name="Zhao C."/>
            <person name="Li S."/>
            <person name="Dong L."/>
            <person name="Huang Y."/>
            <person name="Li L."/>
            <person name="Xi Y."/>
            <person name="Qi Q."/>
            <person name="Li W."/>
            <person name="Zhang B."/>
            <person name="Hu W."/>
            <person name="Zhang Y."/>
            <person name="Tian X."/>
            <person name="Jiao Y."/>
            <person name="Liang X."/>
            <person name="Jin J."/>
            <person name="Gao L."/>
            <person name="Zheng W."/>
            <person name="Hao B."/>
            <person name="Liu S.-M."/>
            <person name="Wang W."/>
            <person name="Yuan L."/>
            <person name="Cao M."/>
            <person name="McDermott J."/>
            <person name="Samudrala R."/>
            <person name="Wang J."/>
            <person name="Wong G.K.-S."/>
            <person name="Yang H."/>
        </authorList>
    </citation>
    <scope>NUCLEOTIDE SEQUENCE [LARGE SCALE GENOMIC DNA]</scope>
    <source>
        <strain>cv. Nipponbare</strain>
    </source>
</reference>
<reference key="7">
    <citation type="journal article" date="2003" name="Science">
        <title>Collection, mapping, and annotation of over 28,000 cDNA clones from japonica rice.</title>
        <authorList>
            <consortium name="The rice full-length cDNA consortium"/>
        </authorList>
    </citation>
    <scope>NUCLEOTIDE SEQUENCE [LARGE SCALE MRNA]</scope>
    <source>
        <strain>cv. Nipponbare</strain>
    </source>
</reference>
<reference key="8">
    <citation type="journal article" date="2010" name="EMBO J.">
        <title>Rice early flowering1, a CKI, phosphorylates DELLA protein SLR1 to negatively regulate gibberellin signalling.</title>
        <authorList>
            <person name="Dai C."/>
            <person name="Xue H.W."/>
        </authorList>
    </citation>
    <scope>FUNCTION</scope>
    <scope>INTERACTION WITH SLR1</scope>
    <scope>SUBCELLULAR LOCATION</scope>
    <scope>TISSUE SPECIFICITY</scope>
    <scope>DEVELOPMENTAL STAGE</scope>
    <scope>INDUCTION</scope>
    <scope>DISRUPTION PHENOTYPE</scope>
    <source>
        <strain>cv. Zhonghua 11</strain>
    </source>
</reference>
<reference key="9">
    <citation type="journal article" date="2011" name="J. Integr. Plant Biol.">
        <title>Rice homeobox transcription factor HOX1a positively regulates gibberellin responses by directly suppressing EL1.</title>
        <authorList>
            <person name="Wen B.Q."/>
            <person name="Xing M.Q."/>
            <person name="Zhang H."/>
            <person name="Dai C."/>
            <person name="Xue H.W."/>
        </authorList>
    </citation>
    <scope>FUNCTION</scope>
</reference>
<reference key="10">
    <citation type="journal article" date="2015" name="Rice">
        <title>The rice floral repressor early flowering1 affects spikelet fertility by modulating gibberellin signaling.</title>
        <authorList>
            <person name="Kwon C.T."/>
            <person name="Kim S.H."/>
            <person name="Kim D."/>
            <person name="Paek N.C."/>
        </authorList>
    </citation>
    <scope>FUNCTION</scope>
</reference>
<feature type="chain" id="PRO_0000437451" description="Casein kinase 1-like protein HD16">
    <location>
        <begin position="1"/>
        <end position="707"/>
    </location>
</feature>
<feature type="domain" description="Protein kinase" evidence="2">
    <location>
        <begin position="147"/>
        <end position="425"/>
    </location>
</feature>
<feature type="region of interest" description="Disordered" evidence="3">
    <location>
        <begin position="19"/>
        <end position="67"/>
    </location>
</feature>
<feature type="compositionally biased region" description="Low complexity" evidence="3">
    <location>
        <begin position="24"/>
        <end position="37"/>
    </location>
</feature>
<feature type="active site" description="Proton acceptor" evidence="2">
    <location>
        <position position="276"/>
    </location>
</feature>
<feature type="binding site" evidence="2">
    <location>
        <begin position="153"/>
        <end position="161"/>
    </location>
    <ligand>
        <name>ATP</name>
        <dbReference type="ChEBI" id="CHEBI:30616"/>
    </ligand>
</feature>
<feature type="binding site" evidence="2">
    <location>
        <position position="184"/>
    </location>
    <ligand>
        <name>ATP</name>
        <dbReference type="ChEBI" id="CHEBI:30616"/>
    </ligand>
</feature>
<gene>
    <name evidence="9" type="primary">HD16</name>
    <name evidence="10" type="synonym">CKI</name>
    <name evidence="8" type="synonym">EL1</name>
    <name evidence="13" type="ordered locus">Os03g0793500</name>
    <name evidence="12" type="ordered locus">LOC_Os03g57940</name>
    <name evidence="14" type="ORF">OsJ_12923</name>
    <name evidence="11" type="ORF">OSJNBb0060J21.12</name>
</gene>
<dbReference type="EC" id="2.7.11.1" evidence="10"/>
<dbReference type="EMBL" id="AB753041">
    <property type="protein sequence ID" value="BAN15567.1"/>
    <property type="molecule type" value="mRNA"/>
</dbReference>
<dbReference type="EMBL" id="AC090871">
    <property type="protein sequence ID" value="AAO37965.1"/>
    <property type="molecule type" value="Genomic_DNA"/>
</dbReference>
<dbReference type="EMBL" id="DP000009">
    <property type="protein sequence ID" value="ABF99311.1"/>
    <property type="molecule type" value="Genomic_DNA"/>
</dbReference>
<dbReference type="EMBL" id="AP008209">
    <property type="protein sequence ID" value="BAF13445.1"/>
    <property type="molecule type" value="Genomic_DNA"/>
</dbReference>
<dbReference type="EMBL" id="AP014959">
    <property type="protein sequence ID" value="BAS86807.1"/>
    <property type="molecule type" value="Genomic_DNA"/>
</dbReference>
<dbReference type="EMBL" id="CM000140">
    <property type="protein sequence ID" value="EAZ28883.1"/>
    <property type="molecule type" value="Genomic_DNA"/>
</dbReference>
<dbReference type="EMBL" id="AK121620">
    <property type="protein sequence ID" value="BAH00578.1"/>
    <property type="molecule type" value="mRNA"/>
</dbReference>
<dbReference type="RefSeq" id="XP_015632525.1">
    <property type="nucleotide sequence ID" value="XM_015777039.1"/>
</dbReference>
<dbReference type="RefSeq" id="XP_015632526.1">
    <property type="nucleotide sequence ID" value="XM_015777040.1"/>
</dbReference>
<dbReference type="RefSeq" id="XP_015632527.1">
    <property type="nucleotide sequence ID" value="XM_015777041.1"/>
</dbReference>
<dbReference type="SMR" id="Q852L0"/>
<dbReference type="FunCoup" id="Q852L0">
    <property type="interactions" value="231"/>
</dbReference>
<dbReference type="IntAct" id="Q852L0">
    <property type="interactions" value="1"/>
</dbReference>
<dbReference type="MINT" id="Q852L0"/>
<dbReference type="STRING" id="39947.Q852L0"/>
<dbReference type="PaxDb" id="39947-Q852L0"/>
<dbReference type="EnsemblPlants" id="Os03t0793500-01">
    <property type="protein sequence ID" value="Os03t0793500-01"/>
    <property type="gene ID" value="Os03g0793500"/>
</dbReference>
<dbReference type="EnsemblPlants" id="Os03t0793500-02">
    <property type="protein sequence ID" value="Os03t0793500-02"/>
    <property type="gene ID" value="Os03g0793500"/>
</dbReference>
<dbReference type="Gramene" id="Os03t0793500-01">
    <property type="protein sequence ID" value="Os03t0793500-01"/>
    <property type="gene ID" value="Os03g0793500"/>
</dbReference>
<dbReference type="Gramene" id="Os03t0793500-02">
    <property type="protein sequence ID" value="Os03t0793500-02"/>
    <property type="gene ID" value="Os03g0793500"/>
</dbReference>
<dbReference type="KEGG" id="dosa:Os03g0793500"/>
<dbReference type="eggNOG" id="KOG1164">
    <property type="taxonomic scope" value="Eukaryota"/>
</dbReference>
<dbReference type="HOGENOM" id="CLU_015443_1_0_1"/>
<dbReference type="InParanoid" id="Q852L0"/>
<dbReference type="OMA" id="SSSANFW"/>
<dbReference type="OrthoDB" id="1932208at2759"/>
<dbReference type="Proteomes" id="UP000000763">
    <property type="component" value="Chromosome 3"/>
</dbReference>
<dbReference type="Proteomes" id="UP000007752">
    <property type="component" value="Chromosome 3"/>
</dbReference>
<dbReference type="Proteomes" id="UP000059680">
    <property type="component" value="Chromosome 3"/>
</dbReference>
<dbReference type="GO" id="GO:0005737">
    <property type="term" value="C:cytoplasm"/>
    <property type="evidence" value="ECO:0000318"/>
    <property type="project" value="GO_Central"/>
</dbReference>
<dbReference type="GO" id="GO:0005634">
    <property type="term" value="C:nucleus"/>
    <property type="evidence" value="ECO:0000314"/>
    <property type="project" value="UniProtKB"/>
</dbReference>
<dbReference type="GO" id="GO:0005524">
    <property type="term" value="F:ATP binding"/>
    <property type="evidence" value="ECO:0007669"/>
    <property type="project" value="UniProtKB-KW"/>
</dbReference>
<dbReference type="GO" id="GO:0106310">
    <property type="term" value="F:protein serine kinase activity"/>
    <property type="evidence" value="ECO:0007669"/>
    <property type="project" value="RHEA"/>
</dbReference>
<dbReference type="GO" id="GO:0004674">
    <property type="term" value="F:protein serine/threonine kinase activity"/>
    <property type="evidence" value="ECO:0000318"/>
    <property type="project" value="GO_Central"/>
</dbReference>
<dbReference type="GO" id="GO:0006897">
    <property type="term" value="P:endocytosis"/>
    <property type="evidence" value="ECO:0000318"/>
    <property type="project" value="GO_Central"/>
</dbReference>
<dbReference type="GO" id="GO:0009908">
    <property type="term" value="P:flower development"/>
    <property type="evidence" value="ECO:0007669"/>
    <property type="project" value="UniProtKB-KW"/>
</dbReference>
<dbReference type="GO" id="GO:0009740">
    <property type="term" value="P:gibberellic acid mediated signaling pathway"/>
    <property type="evidence" value="ECO:0000318"/>
    <property type="project" value="GO_Central"/>
</dbReference>
<dbReference type="GO" id="GO:0010476">
    <property type="term" value="P:gibberellin mediated signaling pathway"/>
    <property type="evidence" value="ECO:0000315"/>
    <property type="project" value="UniProtKB"/>
</dbReference>
<dbReference type="GO" id="GO:0048586">
    <property type="term" value="P:regulation of long-day photoperiodism, flowering"/>
    <property type="evidence" value="ECO:0000315"/>
    <property type="project" value="UniProtKB"/>
</dbReference>
<dbReference type="CDD" id="cd14016">
    <property type="entry name" value="STKc_CK1"/>
    <property type="match status" value="1"/>
</dbReference>
<dbReference type="FunFam" id="1.10.510.10:FF:000236">
    <property type="entry name" value="Casein kinase 1-like protein"/>
    <property type="match status" value="1"/>
</dbReference>
<dbReference type="Gene3D" id="1.10.510.10">
    <property type="entry name" value="Transferase(Phosphotransferase) domain 1"/>
    <property type="match status" value="1"/>
</dbReference>
<dbReference type="InterPro" id="IPR050235">
    <property type="entry name" value="CK1_Ser-Thr_kinase"/>
</dbReference>
<dbReference type="InterPro" id="IPR055900">
    <property type="entry name" value="DUF7477"/>
</dbReference>
<dbReference type="InterPro" id="IPR011009">
    <property type="entry name" value="Kinase-like_dom_sf"/>
</dbReference>
<dbReference type="InterPro" id="IPR000719">
    <property type="entry name" value="Prot_kinase_dom"/>
</dbReference>
<dbReference type="InterPro" id="IPR017441">
    <property type="entry name" value="Protein_kinase_ATP_BS"/>
</dbReference>
<dbReference type="InterPro" id="IPR008271">
    <property type="entry name" value="Ser/Thr_kinase_AS"/>
</dbReference>
<dbReference type="PANTHER" id="PTHR11909">
    <property type="entry name" value="CASEIN KINASE-RELATED"/>
    <property type="match status" value="1"/>
</dbReference>
<dbReference type="Pfam" id="PF24289">
    <property type="entry name" value="DUF7477"/>
    <property type="match status" value="1"/>
</dbReference>
<dbReference type="Pfam" id="PF00069">
    <property type="entry name" value="Pkinase"/>
    <property type="match status" value="1"/>
</dbReference>
<dbReference type="SMART" id="SM00220">
    <property type="entry name" value="S_TKc"/>
    <property type="match status" value="1"/>
</dbReference>
<dbReference type="SUPFAM" id="SSF56112">
    <property type="entry name" value="Protein kinase-like (PK-like)"/>
    <property type="match status" value="1"/>
</dbReference>
<dbReference type="PROSITE" id="PS00107">
    <property type="entry name" value="PROTEIN_KINASE_ATP"/>
    <property type="match status" value="1"/>
</dbReference>
<dbReference type="PROSITE" id="PS50011">
    <property type="entry name" value="PROTEIN_KINASE_DOM"/>
    <property type="match status" value="1"/>
</dbReference>
<dbReference type="PROSITE" id="PS00108">
    <property type="entry name" value="PROTEIN_KINASE_ST"/>
    <property type="match status" value="1"/>
</dbReference>
<accession>Q852L0</accession>
<proteinExistence type="evidence at protein level"/>
<protein>
    <recommendedName>
        <fullName evidence="10">Casein kinase 1-like protein HD16</fullName>
        <ecNumber evidence="10">2.7.11.1</ecNumber>
    </recommendedName>
    <alternativeName>
        <fullName evidence="13">Os03g0793500 protein</fullName>
    </alternativeName>
    <alternativeName>
        <fullName evidence="8">Protein EARLY FLOWERING 1</fullName>
    </alternativeName>
    <alternativeName>
        <fullName evidence="9">Protein HEADING DATE 16</fullName>
    </alternativeName>
</protein>
<evidence type="ECO:0000250" key="1">
    <source>
        <dbReference type="UniProtKB" id="P48730"/>
    </source>
</evidence>
<evidence type="ECO:0000255" key="2">
    <source>
        <dbReference type="PROSITE-ProRule" id="PRU00159"/>
    </source>
</evidence>
<evidence type="ECO:0000256" key="3">
    <source>
        <dbReference type="SAM" id="MobiDB-lite"/>
    </source>
</evidence>
<evidence type="ECO:0000269" key="4">
    <source>
    </source>
</evidence>
<evidence type="ECO:0000269" key="5">
    <source>
    </source>
</evidence>
<evidence type="ECO:0000269" key="6">
    <source>
    </source>
</evidence>
<evidence type="ECO:0000269" key="7">
    <source>
    </source>
</evidence>
<evidence type="ECO:0000303" key="8">
    <source>
    </source>
</evidence>
<evidence type="ECO:0000303" key="9">
    <source>
    </source>
</evidence>
<evidence type="ECO:0000305" key="10"/>
<evidence type="ECO:0000312" key="11">
    <source>
        <dbReference type="EMBL" id="AAO37965.1"/>
    </source>
</evidence>
<evidence type="ECO:0000312" key="12">
    <source>
        <dbReference type="EMBL" id="ABF99311.1"/>
    </source>
</evidence>
<evidence type="ECO:0000312" key="13">
    <source>
        <dbReference type="EMBL" id="BAF13445.1"/>
    </source>
</evidence>
<evidence type="ECO:0000312" key="14">
    <source>
        <dbReference type="EMBL" id="EAZ28883.1"/>
    </source>
</evidence>